<accession>Q92341</accession>
<protein>
    <recommendedName>
        <fullName evidence="7">Low affinity heme transporter str3</fullName>
    </recommendedName>
    <alternativeName>
        <fullName>Siderophore iron transporter 3</fullName>
    </alternativeName>
</protein>
<dbReference type="EMBL" id="CU329670">
    <property type="protein sequence ID" value="CAB03597.1"/>
    <property type="molecule type" value="Genomic_DNA"/>
</dbReference>
<dbReference type="PIR" id="T38110">
    <property type="entry name" value="T38110"/>
</dbReference>
<dbReference type="RefSeq" id="NP_592792.1">
    <property type="nucleotide sequence ID" value="NM_001018192.2"/>
</dbReference>
<dbReference type="BioGRID" id="278381">
    <property type="interactions" value="16"/>
</dbReference>
<dbReference type="STRING" id="284812.Q92341"/>
<dbReference type="TCDB" id="2.A.1.16.9">
    <property type="family name" value="the major facilitator superfamily (mfs)"/>
</dbReference>
<dbReference type="iPTMnet" id="Q92341"/>
<dbReference type="PaxDb" id="4896-SPAC1F8.03c.1"/>
<dbReference type="EnsemblFungi" id="SPAC1F8.03c.1">
    <property type="protein sequence ID" value="SPAC1F8.03c.1:pep"/>
    <property type="gene ID" value="SPAC1F8.03c"/>
</dbReference>
<dbReference type="GeneID" id="2541891"/>
<dbReference type="KEGG" id="spo:2541891"/>
<dbReference type="PomBase" id="SPAC1F8.03c">
    <property type="gene designation" value="str3"/>
</dbReference>
<dbReference type="VEuPathDB" id="FungiDB:SPAC1F8.03c"/>
<dbReference type="eggNOG" id="KOG0254">
    <property type="taxonomic scope" value="Eukaryota"/>
</dbReference>
<dbReference type="HOGENOM" id="CLU_012970_2_2_1"/>
<dbReference type="InParanoid" id="Q92341"/>
<dbReference type="OMA" id="NQWRWGY"/>
<dbReference type="PhylomeDB" id="Q92341"/>
<dbReference type="PRO" id="PR:Q92341"/>
<dbReference type="Proteomes" id="UP000002485">
    <property type="component" value="Chromosome I"/>
</dbReference>
<dbReference type="GO" id="GO:0016020">
    <property type="term" value="C:membrane"/>
    <property type="evidence" value="ECO:0000314"/>
    <property type="project" value="PomBase"/>
</dbReference>
<dbReference type="GO" id="GO:0005886">
    <property type="term" value="C:plasma membrane"/>
    <property type="evidence" value="ECO:0000314"/>
    <property type="project" value="PomBase"/>
</dbReference>
<dbReference type="GO" id="GO:0020037">
    <property type="term" value="F:heme binding"/>
    <property type="evidence" value="ECO:0000314"/>
    <property type="project" value="PomBase"/>
</dbReference>
<dbReference type="GO" id="GO:0015232">
    <property type="term" value="F:heme transmembrane transporter activity"/>
    <property type="evidence" value="ECO:0000315"/>
    <property type="project" value="PomBase"/>
</dbReference>
<dbReference type="GO" id="GO:0022857">
    <property type="term" value="F:transmembrane transporter activity"/>
    <property type="evidence" value="ECO:0000318"/>
    <property type="project" value="GO_Central"/>
</dbReference>
<dbReference type="GO" id="GO:1904334">
    <property type="term" value="P:heme import across plasma membrane"/>
    <property type="evidence" value="ECO:0000315"/>
    <property type="project" value="PomBase"/>
</dbReference>
<dbReference type="GO" id="GO:0055085">
    <property type="term" value="P:transmembrane transport"/>
    <property type="evidence" value="ECO:0000318"/>
    <property type="project" value="GO_Central"/>
</dbReference>
<dbReference type="CDD" id="cd17322">
    <property type="entry name" value="MFS_ARN_like"/>
    <property type="match status" value="1"/>
</dbReference>
<dbReference type="FunFam" id="1.20.1250.20:FF:001009">
    <property type="entry name" value="Unplaced genomic scaffold supercont2.19, whole genome shotgun sequence"/>
    <property type="match status" value="1"/>
</dbReference>
<dbReference type="Gene3D" id="1.20.1250.20">
    <property type="entry name" value="MFS general substrate transporter like domains"/>
    <property type="match status" value="2"/>
</dbReference>
<dbReference type="InterPro" id="IPR011701">
    <property type="entry name" value="MFS"/>
</dbReference>
<dbReference type="InterPro" id="IPR036259">
    <property type="entry name" value="MFS_trans_sf"/>
</dbReference>
<dbReference type="PANTHER" id="PTHR23501:SF58">
    <property type="entry name" value="LOW AFFINITY HEME TRANSPORTER STR3"/>
    <property type="match status" value="1"/>
</dbReference>
<dbReference type="PANTHER" id="PTHR23501">
    <property type="entry name" value="MAJOR FACILITATOR SUPERFAMILY"/>
    <property type="match status" value="1"/>
</dbReference>
<dbReference type="Pfam" id="PF07690">
    <property type="entry name" value="MFS_1"/>
    <property type="match status" value="1"/>
</dbReference>
<dbReference type="SUPFAM" id="SSF103473">
    <property type="entry name" value="MFS general substrate transporter"/>
    <property type="match status" value="1"/>
</dbReference>
<comment type="function">
    <text evidence="5">Low affinity heme transporter involved in the assimilation of exogenous heme during conditions of low cellular iron.</text>
</comment>
<comment type="subcellular location">
    <subcellularLocation>
        <location evidence="5">Cell membrane</location>
        <topology evidence="5">Multi-pass membrane protein</topology>
    </subcellularLocation>
</comment>
<comment type="induction">
    <text evidence="3 5">Induced in iron-deplete conditions (at protein level) (PubMed:12888492, PubMed:29549126). Repressed in iron-replete conditions by transcriptional repressor fep1 (PubMed:12888492, PubMed:29549126).</text>
</comment>
<comment type="disruption phenotype">
    <text evidence="5">Impairs heme import into cell; simultaneous disruption of shu1 exacerbates the effect.</text>
</comment>
<comment type="similarity">
    <text evidence="8">Belongs to the major facilitator superfamily.</text>
</comment>
<sequence>MEAKETHSISDHEVELQDAKPEEKSENGNFVFEKAFSSDEEKGSGYNTNETYSKMDNSLQHRGVSKIEAVRDSIYQNKRGMYLAYAFGIAILACSWASAIQSSTTYSYQVYATASFNRTSMISTLEIATAIISSVCKPILGKFSDITSRPMTYTLVLLFYVIGFIVVASSSTISAYVIGSVFISIGSSGLDYLNTLVVGDLTSLKWRGFMTALLSTPYIATVWFTGFIVQGIIDSNWRWGYGMFAIIMPAVMTPAVIILMYLERQANKDENIKKIINYQTEEKNKNKQSKWQKLWKAVLEVDLFGLILLGVGWSILLLPFSLTSYAKNGWKNPSMIAMMVVGGVILIAYSGYEMFIAPYPSCPRRVMNRTFITAVIIDFFYYLAGYLQSMYFTTYTWILYDWSYRDWTYFNNTMTIALCVFGVFAGAMHRVFHRYKYLQIIGLVIKIVGYGILIRPNFAATGKVDLAWSLILIGMGGSFSVVGSQVSCQASVPHQDLAIASSLLPLYTNIGGAIGAAIASPIFSNKVPKYLREYLPSSINDTQVYNFYSDSSLIREYPVGTEIRDGAIKAYSRSMFFLLVPAVSLSFIPLAAAFWQSNFYLGNQQNAVEGDQDHKKKGDKETTQEEKIII</sequence>
<reference key="1">
    <citation type="journal article" date="2002" name="Nature">
        <title>The genome sequence of Schizosaccharomyces pombe.</title>
        <authorList>
            <person name="Wood V."/>
            <person name="Gwilliam R."/>
            <person name="Rajandream M.A."/>
            <person name="Lyne M.H."/>
            <person name="Lyne R."/>
            <person name="Stewart A."/>
            <person name="Sgouros J.G."/>
            <person name="Peat N."/>
            <person name="Hayles J."/>
            <person name="Baker S.G."/>
            <person name="Basham D."/>
            <person name="Bowman S."/>
            <person name="Brooks K."/>
            <person name="Brown D."/>
            <person name="Brown S."/>
            <person name="Chillingworth T."/>
            <person name="Churcher C.M."/>
            <person name="Collins M."/>
            <person name="Connor R."/>
            <person name="Cronin A."/>
            <person name="Davis P."/>
            <person name="Feltwell T."/>
            <person name="Fraser A."/>
            <person name="Gentles S."/>
            <person name="Goble A."/>
            <person name="Hamlin N."/>
            <person name="Harris D.E."/>
            <person name="Hidalgo J."/>
            <person name="Hodgson G."/>
            <person name="Holroyd S."/>
            <person name="Hornsby T."/>
            <person name="Howarth S."/>
            <person name="Huckle E.J."/>
            <person name="Hunt S."/>
            <person name="Jagels K."/>
            <person name="James K.D."/>
            <person name="Jones L."/>
            <person name="Jones M."/>
            <person name="Leather S."/>
            <person name="McDonald S."/>
            <person name="McLean J."/>
            <person name="Mooney P."/>
            <person name="Moule S."/>
            <person name="Mungall K.L."/>
            <person name="Murphy L.D."/>
            <person name="Niblett D."/>
            <person name="Odell C."/>
            <person name="Oliver K."/>
            <person name="O'Neil S."/>
            <person name="Pearson D."/>
            <person name="Quail M.A."/>
            <person name="Rabbinowitsch E."/>
            <person name="Rutherford K.M."/>
            <person name="Rutter S."/>
            <person name="Saunders D."/>
            <person name="Seeger K."/>
            <person name="Sharp S."/>
            <person name="Skelton J."/>
            <person name="Simmonds M.N."/>
            <person name="Squares R."/>
            <person name="Squares S."/>
            <person name="Stevens K."/>
            <person name="Taylor K."/>
            <person name="Taylor R.G."/>
            <person name="Tivey A."/>
            <person name="Walsh S.V."/>
            <person name="Warren T."/>
            <person name="Whitehead S."/>
            <person name="Woodward J.R."/>
            <person name="Volckaert G."/>
            <person name="Aert R."/>
            <person name="Robben J."/>
            <person name="Grymonprez B."/>
            <person name="Weltjens I."/>
            <person name="Vanstreels E."/>
            <person name="Rieger M."/>
            <person name="Schaefer M."/>
            <person name="Mueller-Auer S."/>
            <person name="Gabel C."/>
            <person name="Fuchs M."/>
            <person name="Duesterhoeft A."/>
            <person name="Fritzc C."/>
            <person name="Holzer E."/>
            <person name="Moestl D."/>
            <person name="Hilbert H."/>
            <person name="Borzym K."/>
            <person name="Langer I."/>
            <person name="Beck A."/>
            <person name="Lehrach H."/>
            <person name="Reinhardt R."/>
            <person name="Pohl T.M."/>
            <person name="Eger P."/>
            <person name="Zimmermann W."/>
            <person name="Wedler H."/>
            <person name="Wambutt R."/>
            <person name="Purnelle B."/>
            <person name="Goffeau A."/>
            <person name="Cadieu E."/>
            <person name="Dreano S."/>
            <person name="Gloux S."/>
            <person name="Lelaure V."/>
            <person name="Mottier S."/>
            <person name="Galibert F."/>
            <person name="Aves S.J."/>
            <person name="Xiang Z."/>
            <person name="Hunt C."/>
            <person name="Moore K."/>
            <person name="Hurst S.M."/>
            <person name="Lucas M."/>
            <person name="Rochet M."/>
            <person name="Gaillardin C."/>
            <person name="Tallada V.A."/>
            <person name="Garzon A."/>
            <person name="Thode G."/>
            <person name="Daga R.R."/>
            <person name="Cruzado L."/>
            <person name="Jimenez J."/>
            <person name="Sanchez M."/>
            <person name="del Rey F."/>
            <person name="Benito J."/>
            <person name="Dominguez A."/>
            <person name="Revuelta J.L."/>
            <person name="Moreno S."/>
            <person name="Armstrong J."/>
            <person name="Forsburg S.L."/>
            <person name="Cerutti L."/>
            <person name="Lowe T."/>
            <person name="McCombie W.R."/>
            <person name="Paulsen I."/>
            <person name="Potashkin J."/>
            <person name="Shpakovski G.V."/>
            <person name="Ussery D."/>
            <person name="Barrell B.G."/>
            <person name="Nurse P."/>
        </authorList>
    </citation>
    <scope>NUCLEOTIDE SEQUENCE [LARGE SCALE GENOMIC DNA]</scope>
    <source>
        <strain>972 / ATCC 24843</strain>
    </source>
</reference>
<reference key="2">
    <citation type="journal article" date="2003" name="Nucleic Acids Res.">
        <title>Fep1 represses expression of the fission yeast Schizosaccharomyces pombe siderophore-iron transport system.</title>
        <authorList>
            <person name="Pelletier B."/>
            <person name="Beaudoin J."/>
            <person name="Philpott C.C."/>
            <person name="Labbe S."/>
        </authorList>
    </citation>
    <scope>INDUCTION</scope>
</reference>
<reference key="3">
    <citation type="journal article" date="2008" name="J. Proteome Res.">
        <title>Phosphoproteome analysis of fission yeast.</title>
        <authorList>
            <person name="Wilson-Grady J.T."/>
            <person name="Villen J."/>
            <person name="Gygi S.P."/>
        </authorList>
    </citation>
    <scope>PHOSPHORYLATION [LARGE SCALE ANALYSIS] AT SER-10 AND SER-38</scope>
    <scope>IDENTIFICATION BY MASS SPECTROMETRY</scope>
</reference>
<reference key="4">
    <citation type="journal article" date="2018" name="J. Biol. Chem.">
        <title>The major facilitator transporter Str3 is required for low-affinity heme acquisition in Schizosaccharomyces pombe.</title>
        <authorList>
            <person name="Normant V."/>
            <person name="Mourer T."/>
            <person name="Labbe S."/>
        </authorList>
    </citation>
    <scope>FUNCTION</scope>
    <scope>SUBCELLULAR LOCATION</scope>
    <scope>INDUCTION</scope>
    <scope>DISRUPTION PHENOTYPE</scope>
    <scope>TOPOLOGY</scope>
    <scope>MUTAGENESIS OF TYR-530; TYR-534; SER-552 AND TYR-557</scope>
</reference>
<feature type="chain" id="PRO_0000084881" description="Low affinity heme transporter str3">
    <location>
        <begin position="1"/>
        <end position="630"/>
    </location>
</feature>
<feature type="topological domain" description="Cytoplasmic" evidence="9">
    <location>
        <begin position="1"/>
        <end position="79"/>
    </location>
</feature>
<feature type="transmembrane region" description="Helical" evidence="1">
    <location>
        <begin position="80"/>
        <end position="100"/>
    </location>
</feature>
<feature type="topological domain" description="Extracellular" evidence="9">
    <location>
        <begin position="101"/>
        <end position="120"/>
    </location>
</feature>
<feature type="transmembrane region" description="Helical" evidence="1">
    <location>
        <begin position="121"/>
        <end position="141"/>
    </location>
</feature>
<feature type="topological domain" description="Cytoplasmic" evidence="9">
    <location>
        <begin position="142"/>
        <end position="154"/>
    </location>
</feature>
<feature type="transmembrane region" description="Helical" evidence="1">
    <location>
        <begin position="155"/>
        <end position="175"/>
    </location>
</feature>
<feature type="topological domain" description="Extracellular" evidence="9">
    <location>
        <position position="176"/>
    </location>
</feature>
<feature type="transmembrane region" description="Helical" evidence="1">
    <location>
        <begin position="177"/>
        <end position="197"/>
    </location>
</feature>
<feature type="topological domain" description="Cytoplasmic" evidence="9">
    <location>
        <begin position="198"/>
        <end position="208"/>
    </location>
</feature>
<feature type="transmembrane region" description="Helical" evidence="1">
    <location>
        <begin position="209"/>
        <end position="229"/>
    </location>
</feature>
<feature type="topological domain" description="Extracellular" evidence="9">
    <location>
        <begin position="230"/>
        <end position="241"/>
    </location>
</feature>
<feature type="transmembrane region" description="Helical" evidence="1">
    <location>
        <begin position="242"/>
        <end position="262"/>
    </location>
</feature>
<feature type="topological domain" description="Cytoplasmic" evidence="9">
    <location>
        <begin position="263"/>
        <end position="302"/>
    </location>
</feature>
<feature type="transmembrane region" description="Helical" evidence="1">
    <location>
        <begin position="303"/>
        <end position="323"/>
    </location>
</feature>
<feature type="topological domain" description="Extracellular" evidence="9">
    <location>
        <begin position="324"/>
        <end position="335"/>
    </location>
</feature>
<feature type="transmembrane region" description="Helical" evidence="1">
    <location>
        <begin position="336"/>
        <end position="356"/>
    </location>
</feature>
<feature type="topological domain" description="Cytoplasmic" evidence="9">
    <location>
        <begin position="357"/>
        <end position="370"/>
    </location>
</feature>
<feature type="transmembrane region" description="Helical" evidence="1">
    <location>
        <begin position="371"/>
        <end position="391"/>
    </location>
</feature>
<feature type="topological domain" description="Extracellular" evidence="9">
    <location>
        <begin position="392"/>
        <end position="406"/>
    </location>
</feature>
<feature type="transmembrane region" description="Helical" evidence="1">
    <location>
        <begin position="407"/>
        <end position="427"/>
    </location>
</feature>
<feature type="topological domain" description="Cytoplasmic" evidence="9">
    <location>
        <begin position="428"/>
        <end position="439"/>
    </location>
</feature>
<feature type="transmembrane region" description="Helical" evidence="1">
    <location>
        <begin position="440"/>
        <end position="460"/>
    </location>
</feature>
<feature type="topological domain" description="Extracellular" evidence="9">
    <location>
        <begin position="461"/>
        <end position="465"/>
    </location>
</feature>
<feature type="transmembrane region" description="Helical" evidence="1">
    <location>
        <begin position="466"/>
        <end position="486"/>
    </location>
</feature>
<feature type="topological domain" description="Cytoplasmic" evidence="9">
    <location>
        <begin position="487"/>
        <end position="502"/>
    </location>
</feature>
<feature type="transmembrane region" description="Helical" evidence="1">
    <location>
        <begin position="503"/>
        <end position="523"/>
    </location>
</feature>
<feature type="topological domain" description="Extracellular" evidence="9">
    <location>
        <begin position="524"/>
        <end position="574"/>
    </location>
</feature>
<feature type="transmembrane region" description="Helical" evidence="1">
    <location>
        <begin position="575"/>
        <end position="595"/>
    </location>
</feature>
<feature type="topological domain" description="Cytoplasmic" evidence="9">
    <location>
        <begin position="596"/>
        <end position="630"/>
    </location>
</feature>
<feature type="region of interest" description="Disordered" evidence="2">
    <location>
        <begin position="1"/>
        <end position="51"/>
    </location>
</feature>
<feature type="region of interest" description="Heme binding" evidence="5">
    <location>
        <begin position="522"/>
        <end position="576"/>
    </location>
</feature>
<feature type="region of interest" description="Disordered" evidence="2">
    <location>
        <begin position="610"/>
        <end position="630"/>
    </location>
</feature>
<feature type="compositionally biased region" description="Basic and acidic residues" evidence="2">
    <location>
        <begin position="1"/>
        <end position="26"/>
    </location>
</feature>
<feature type="compositionally biased region" description="Basic and acidic residues" evidence="2">
    <location>
        <begin position="611"/>
        <end position="630"/>
    </location>
</feature>
<feature type="modified residue" description="Phosphoserine" evidence="4">
    <location>
        <position position="10"/>
    </location>
</feature>
<feature type="modified residue" description="Phosphoserine" evidence="4">
    <location>
        <position position="38"/>
    </location>
</feature>
<feature type="mutagenesis site" description="Decreases heme binding and cellular heme import but does not affect localization to the cell membrane; when associated with A-534; A-552 and A-557." evidence="5">
    <original>Y</original>
    <variation>A</variation>
    <location>
        <position position="530"/>
    </location>
</feature>
<feature type="mutagenesis site" description="Decreases heme binding and cellular heme import but does not affect localization to the cell membrane; when associated with A-530; A-552 and A-557." evidence="5">
    <original>Y</original>
    <variation>A</variation>
    <location>
        <position position="534"/>
    </location>
</feature>
<feature type="mutagenesis site" description="Decreases heme binding cellular heme import but does not affect localization to the cell membrane; when associated with A-530; A-534 and A-557." evidence="5">
    <original>S</original>
    <variation>A</variation>
    <location>
        <position position="552"/>
    </location>
</feature>
<feature type="mutagenesis site" description="Decreases heme binding cellular heme import but does not affect localization to the cell membrane; when associated with A-530; A-534 and A-552." evidence="5">
    <original>Y</original>
    <variation>A</variation>
    <location>
        <position position="557"/>
    </location>
</feature>
<gene>
    <name evidence="6" type="primary">str3</name>
    <name evidence="10" type="ORF">SPAC1F8.03c</name>
</gene>
<organism>
    <name type="scientific">Schizosaccharomyces pombe (strain 972 / ATCC 24843)</name>
    <name type="common">Fission yeast</name>
    <dbReference type="NCBI Taxonomy" id="284812"/>
    <lineage>
        <taxon>Eukaryota</taxon>
        <taxon>Fungi</taxon>
        <taxon>Dikarya</taxon>
        <taxon>Ascomycota</taxon>
        <taxon>Taphrinomycotina</taxon>
        <taxon>Schizosaccharomycetes</taxon>
        <taxon>Schizosaccharomycetales</taxon>
        <taxon>Schizosaccharomycetaceae</taxon>
        <taxon>Schizosaccharomyces</taxon>
    </lineage>
</organism>
<name>STR3_SCHPO</name>
<keyword id="KW-1003">Cell membrane</keyword>
<keyword id="KW-0406">Ion transport</keyword>
<keyword id="KW-0408">Iron</keyword>
<keyword id="KW-0410">Iron transport</keyword>
<keyword id="KW-0472">Membrane</keyword>
<keyword id="KW-0597">Phosphoprotein</keyword>
<keyword id="KW-1185">Reference proteome</keyword>
<keyword id="KW-0812">Transmembrane</keyword>
<keyword id="KW-1133">Transmembrane helix</keyword>
<keyword id="KW-0813">Transport</keyword>
<proteinExistence type="evidence at protein level"/>
<evidence type="ECO:0000255" key="1"/>
<evidence type="ECO:0000256" key="2">
    <source>
        <dbReference type="SAM" id="MobiDB-lite"/>
    </source>
</evidence>
<evidence type="ECO:0000269" key="3">
    <source>
    </source>
</evidence>
<evidence type="ECO:0000269" key="4">
    <source>
    </source>
</evidence>
<evidence type="ECO:0000269" key="5">
    <source>
    </source>
</evidence>
<evidence type="ECO:0000303" key="6">
    <source>
    </source>
</evidence>
<evidence type="ECO:0000303" key="7">
    <source>
    </source>
</evidence>
<evidence type="ECO:0000305" key="8"/>
<evidence type="ECO:0000305" key="9">
    <source>
    </source>
</evidence>
<evidence type="ECO:0000312" key="10">
    <source>
        <dbReference type="PomBase" id="SPAC1F8.03c"/>
    </source>
</evidence>